<dbReference type="EMBL" id="CP000918">
    <property type="protein sequence ID" value="ACO15823.1"/>
    <property type="molecule type" value="Genomic_DNA"/>
</dbReference>
<dbReference type="RefSeq" id="WP_000266669.1">
    <property type="nucleotide sequence ID" value="NC_012468.1"/>
</dbReference>
<dbReference type="SMR" id="C1CBK4"/>
<dbReference type="KEGG" id="snm:SP70585_2354"/>
<dbReference type="HOGENOM" id="CLU_040267_0_1_9"/>
<dbReference type="Proteomes" id="UP000002211">
    <property type="component" value="Chromosome"/>
</dbReference>
<dbReference type="GO" id="GO:0005737">
    <property type="term" value="C:cytoplasm"/>
    <property type="evidence" value="ECO:0007669"/>
    <property type="project" value="UniProtKB-SubCell"/>
</dbReference>
<dbReference type="GO" id="GO:0005524">
    <property type="term" value="F:ATP binding"/>
    <property type="evidence" value="ECO:0007669"/>
    <property type="project" value="UniProtKB-UniRule"/>
</dbReference>
<dbReference type="GO" id="GO:0003697">
    <property type="term" value="F:single-stranded DNA binding"/>
    <property type="evidence" value="ECO:0007669"/>
    <property type="project" value="UniProtKB-UniRule"/>
</dbReference>
<dbReference type="GO" id="GO:0006260">
    <property type="term" value="P:DNA replication"/>
    <property type="evidence" value="ECO:0007669"/>
    <property type="project" value="UniProtKB-UniRule"/>
</dbReference>
<dbReference type="GO" id="GO:0000731">
    <property type="term" value="P:DNA synthesis involved in DNA repair"/>
    <property type="evidence" value="ECO:0007669"/>
    <property type="project" value="TreeGrafter"/>
</dbReference>
<dbReference type="GO" id="GO:0006302">
    <property type="term" value="P:double-strand break repair"/>
    <property type="evidence" value="ECO:0007669"/>
    <property type="project" value="TreeGrafter"/>
</dbReference>
<dbReference type="GO" id="GO:0009432">
    <property type="term" value="P:SOS response"/>
    <property type="evidence" value="ECO:0007669"/>
    <property type="project" value="UniProtKB-UniRule"/>
</dbReference>
<dbReference type="CDD" id="cd03242">
    <property type="entry name" value="ABC_RecF"/>
    <property type="match status" value="1"/>
</dbReference>
<dbReference type="FunFam" id="1.20.1050.90:FF:000002">
    <property type="entry name" value="DNA replication and repair protein RecF"/>
    <property type="match status" value="1"/>
</dbReference>
<dbReference type="Gene3D" id="3.40.50.300">
    <property type="entry name" value="P-loop containing nucleotide triphosphate hydrolases"/>
    <property type="match status" value="1"/>
</dbReference>
<dbReference type="Gene3D" id="1.20.1050.90">
    <property type="entry name" value="RecF/RecN/SMC, N-terminal domain"/>
    <property type="match status" value="1"/>
</dbReference>
<dbReference type="HAMAP" id="MF_00365">
    <property type="entry name" value="RecF"/>
    <property type="match status" value="1"/>
</dbReference>
<dbReference type="InterPro" id="IPR001238">
    <property type="entry name" value="DNA-binding_RecF"/>
</dbReference>
<dbReference type="InterPro" id="IPR018078">
    <property type="entry name" value="DNA-binding_RecF_CS"/>
</dbReference>
<dbReference type="InterPro" id="IPR027417">
    <property type="entry name" value="P-loop_NTPase"/>
</dbReference>
<dbReference type="InterPro" id="IPR003395">
    <property type="entry name" value="RecF/RecN/SMC_N"/>
</dbReference>
<dbReference type="InterPro" id="IPR042174">
    <property type="entry name" value="RecF_2"/>
</dbReference>
<dbReference type="NCBIfam" id="TIGR00611">
    <property type="entry name" value="recf"/>
    <property type="match status" value="1"/>
</dbReference>
<dbReference type="PANTHER" id="PTHR32182">
    <property type="entry name" value="DNA REPLICATION AND REPAIR PROTEIN RECF"/>
    <property type="match status" value="1"/>
</dbReference>
<dbReference type="PANTHER" id="PTHR32182:SF0">
    <property type="entry name" value="DNA REPLICATION AND REPAIR PROTEIN RECF"/>
    <property type="match status" value="1"/>
</dbReference>
<dbReference type="Pfam" id="PF02463">
    <property type="entry name" value="SMC_N"/>
    <property type="match status" value="1"/>
</dbReference>
<dbReference type="SUPFAM" id="SSF52540">
    <property type="entry name" value="P-loop containing nucleoside triphosphate hydrolases"/>
    <property type="match status" value="1"/>
</dbReference>
<dbReference type="PROSITE" id="PS00617">
    <property type="entry name" value="RECF_1"/>
    <property type="match status" value="1"/>
</dbReference>
<dbReference type="PROSITE" id="PS00618">
    <property type="entry name" value="RECF_2"/>
    <property type="match status" value="1"/>
</dbReference>
<gene>
    <name evidence="1" type="primary">recF</name>
    <name type="ordered locus">SP70585_2354</name>
</gene>
<reference key="1">
    <citation type="journal article" date="2010" name="Genome Biol.">
        <title>Structure and dynamics of the pan-genome of Streptococcus pneumoniae and closely related species.</title>
        <authorList>
            <person name="Donati C."/>
            <person name="Hiller N.L."/>
            <person name="Tettelin H."/>
            <person name="Muzzi A."/>
            <person name="Croucher N.J."/>
            <person name="Angiuoli S.V."/>
            <person name="Oggioni M."/>
            <person name="Dunning Hotopp J.C."/>
            <person name="Hu F.Z."/>
            <person name="Riley D.R."/>
            <person name="Covacci A."/>
            <person name="Mitchell T.J."/>
            <person name="Bentley S.D."/>
            <person name="Kilian M."/>
            <person name="Ehrlich G.D."/>
            <person name="Rappuoli R."/>
            <person name="Moxon E.R."/>
            <person name="Masignani V."/>
        </authorList>
    </citation>
    <scope>NUCLEOTIDE SEQUENCE [LARGE SCALE GENOMIC DNA]</scope>
    <source>
        <strain>70585</strain>
    </source>
</reference>
<keyword id="KW-0067">ATP-binding</keyword>
<keyword id="KW-0963">Cytoplasm</keyword>
<keyword id="KW-0227">DNA damage</keyword>
<keyword id="KW-0234">DNA repair</keyword>
<keyword id="KW-0235">DNA replication</keyword>
<keyword id="KW-0238">DNA-binding</keyword>
<keyword id="KW-0547">Nucleotide-binding</keyword>
<keyword id="KW-0742">SOS response</keyword>
<sequence length="365" mass="41960">MWLQHLSLKTFRNYKETKIDFNPKLNVFLGRNAQGKTNMLEAIYFLALTRSHRTRTDKNLIHFDEEQLHLSGLVQKKTGSIPLEIELTQKGRVTKVNHLKQARLSDYVGHMNVVLFAPEDLQLIKGAPSIRRKFIDMELGQIKPIYLSDLTNYNHILKQRNTYLKSDQKIDETFLSVLDDQLVDYGCRVMNHRLDFIKKLESFGRKKHFELSNQIEELSISYQSSVNITDKQNLSESFKIALEKSRSRDLFKKNTGVGPHRDDISFYINGMDASFGSQGQHRSLVLSIKLAEIELMESITTESPILLLDDVMSELDNTRQLKLLETISQSIQTFITTTSLDHLQNLPENLSIFTIQDGKASVNGN</sequence>
<organism>
    <name type="scientific">Streptococcus pneumoniae (strain 70585)</name>
    <dbReference type="NCBI Taxonomy" id="488221"/>
    <lineage>
        <taxon>Bacteria</taxon>
        <taxon>Bacillati</taxon>
        <taxon>Bacillota</taxon>
        <taxon>Bacilli</taxon>
        <taxon>Lactobacillales</taxon>
        <taxon>Streptococcaceae</taxon>
        <taxon>Streptococcus</taxon>
    </lineage>
</organism>
<comment type="function">
    <text evidence="1">The RecF protein is involved in DNA metabolism; it is required for DNA replication and normal SOS inducibility. RecF binds preferentially to single-stranded, linear DNA. It also seems to bind ATP.</text>
</comment>
<comment type="subcellular location">
    <subcellularLocation>
        <location evidence="1">Cytoplasm</location>
    </subcellularLocation>
</comment>
<comment type="similarity">
    <text evidence="1">Belongs to the RecF family.</text>
</comment>
<feature type="chain" id="PRO_1000133701" description="DNA replication and repair protein RecF">
    <location>
        <begin position="1"/>
        <end position="365"/>
    </location>
</feature>
<feature type="binding site" evidence="1">
    <location>
        <begin position="30"/>
        <end position="37"/>
    </location>
    <ligand>
        <name>ATP</name>
        <dbReference type="ChEBI" id="CHEBI:30616"/>
    </ligand>
</feature>
<evidence type="ECO:0000255" key="1">
    <source>
        <dbReference type="HAMAP-Rule" id="MF_00365"/>
    </source>
</evidence>
<name>RECF_STRP7</name>
<protein>
    <recommendedName>
        <fullName evidence="1">DNA replication and repair protein RecF</fullName>
    </recommendedName>
</protein>
<accession>C1CBK4</accession>
<proteinExistence type="inferred from homology"/>